<evidence type="ECO:0000255" key="1">
    <source>
        <dbReference type="HAMAP-Rule" id="MF_01667"/>
    </source>
</evidence>
<protein>
    <recommendedName>
        <fullName evidence="1">Glyoxylate/hydroxypyruvate reductase B</fullName>
        <ecNumber evidence="1">1.1.1.79</ecNumber>
        <ecNumber evidence="1">1.1.1.81</ecNumber>
    </recommendedName>
</protein>
<dbReference type="EC" id="1.1.1.79" evidence="1"/>
<dbReference type="EC" id="1.1.1.81" evidence="1"/>
<dbReference type="EMBL" id="CP001127">
    <property type="protein sequence ID" value="ACF89686.1"/>
    <property type="molecule type" value="Genomic_DNA"/>
</dbReference>
<dbReference type="RefSeq" id="WP_000804695.1">
    <property type="nucleotide sequence ID" value="NC_011094.1"/>
</dbReference>
<dbReference type="SMR" id="B4TZ41"/>
<dbReference type="KEGG" id="sew:SeSA_A3841"/>
<dbReference type="HOGENOM" id="CLU_019796_1_2_6"/>
<dbReference type="Proteomes" id="UP000001865">
    <property type="component" value="Chromosome"/>
</dbReference>
<dbReference type="GO" id="GO:0005829">
    <property type="term" value="C:cytosol"/>
    <property type="evidence" value="ECO:0007669"/>
    <property type="project" value="TreeGrafter"/>
</dbReference>
<dbReference type="GO" id="GO:0005886">
    <property type="term" value="C:plasma membrane"/>
    <property type="evidence" value="ECO:0007669"/>
    <property type="project" value="UniProtKB-UniRule"/>
</dbReference>
<dbReference type="GO" id="GO:0030267">
    <property type="term" value="F:glyoxylate reductase (NADPH) activity"/>
    <property type="evidence" value="ECO:0007669"/>
    <property type="project" value="UniProtKB-UniRule"/>
</dbReference>
<dbReference type="GO" id="GO:0008465">
    <property type="term" value="F:hydroxypyruvate reductase (NADH) activity"/>
    <property type="evidence" value="ECO:0007669"/>
    <property type="project" value="RHEA"/>
</dbReference>
<dbReference type="GO" id="GO:0120509">
    <property type="term" value="F:hydroxypyruvate reductase (NADPH) activity"/>
    <property type="evidence" value="ECO:0007669"/>
    <property type="project" value="RHEA"/>
</dbReference>
<dbReference type="GO" id="GO:0051287">
    <property type="term" value="F:NAD binding"/>
    <property type="evidence" value="ECO:0007669"/>
    <property type="project" value="InterPro"/>
</dbReference>
<dbReference type="CDD" id="cd05301">
    <property type="entry name" value="GDH"/>
    <property type="match status" value="1"/>
</dbReference>
<dbReference type="FunFam" id="3.40.50.720:FF:000026">
    <property type="entry name" value="Glyoxylate/hydroxypyruvate reductase B"/>
    <property type="match status" value="1"/>
</dbReference>
<dbReference type="Gene3D" id="3.40.50.720">
    <property type="entry name" value="NAD(P)-binding Rossmann-like Domain"/>
    <property type="match status" value="2"/>
</dbReference>
<dbReference type="HAMAP" id="MF_01667">
    <property type="entry name" value="2_Hacid_dh_C_GhrB"/>
    <property type="match status" value="1"/>
</dbReference>
<dbReference type="InterPro" id="IPR050223">
    <property type="entry name" value="D-isomer_2-hydroxyacid_DH"/>
</dbReference>
<dbReference type="InterPro" id="IPR006139">
    <property type="entry name" value="D-isomer_2_OHA_DH_cat_dom"/>
</dbReference>
<dbReference type="InterPro" id="IPR029753">
    <property type="entry name" value="D-isomer_DH_CS"/>
</dbReference>
<dbReference type="InterPro" id="IPR006140">
    <property type="entry name" value="D-isomer_DH_NAD-bd"/>
</dbReference>
<dbReference type="InterPro" id="IPR023756">
    <property type="entry name" value="Glyo/OHPyrv_Rdtase_B"/>
</dbReference>
<dbReference type="InterPro" id="IPR036291">
    <property type="entry name" value="NAD(P)-bd_dom_sf"/>
</dbReference>
<dbReference type="NCBIfam" id="NF011938">
    <property type="entry name" value="PRK15409.1"/>
    <property type="match status" value="1"/>
</dbReference>
<dbReference type="PANTHER" id="PTHR10996">
    <property type="entry name" value="2-HYDROXYACID DEHYDROGENASE-RELATED"/>
    <property type="match status" value="1"/>
</dbReference>
<dbReference type="PANTHER" id="PTHR10996:SF283">
    <property type="entry name" value="GLYOXYLATE_HYDROXYPYRUVATE REDUCTASE B"/>
    <property type="match status" value="1"/>
</dbReference>
<dbReference type="Pfam" id="PF00389">
    <property type="entry name" value="2-Hacid_dh"/>
    <property type="match status" value="1"/>
</dbReference>
<dbReference type="Pfam" id="PF02826">
    <property type="entry name" value="2-Hacid_dh_C"/>
    <property type="match status" value="1"/>
</dbReference>
<dbReference type="SUPFAM" id="SSF52283">
    <property type="entry name" value="Formate/glycerate dehydrogenase catalytic domain-like"/>
    <property type="match status" value="1"/>
</dbReference>
<dbReference type="SUPFAM" id="SSF51735">
    <property type="entry name" value="NAD(P)-binding Rossmann-fold domains"/>
    <property type="match status" value="1"/>
</dbReference>
<dbReference type="PROSITE" id="PS00670">
    <property type="entry name" value="D_2_HYDROXYACID_DH_2"/>
    <property type="match status" value="1"/>
</dbReference>
<dbReference type="PROSITE" id="PS00671">
    <property type="entry name" value="D_2_HYDROXYACID_DH_3"/>
    <property type="match status" value="1"/>
</dbReference>
<gene>
    <name evidence="1" type="primary">ghrB</name>
    <name type="ordered locus">SeSA_A3841</name>
</gene>
<sequence>MKPSIILYKTLPDDLLHRLEAHFTVTQVPNLHPETVARHAQAFSSAQGLLGASETVNRALLEKMSALRAASTISVGYDNVEVDALTARKIVLMHTPAVLTETVADTVMALMLATARRVVDVAERVKAGEWTESIGPAWFGVDVHHKTLGIVGMGRIGMALAQRAHFGFTMPVLYHARRRHQEAEDRFNARYCDLDTLLQEADFVCVILPLTAETRHLFGATQFARMKSSAIFINAGRGPVVDENALIAALQNGEIYAAGLDVFEQEPLSVDSPLLNMSNVVAVPHIGSATHETRYNMMACAVDNLIDALQGKIEKNCVNPQAAG</sequence>
<organism>
    <name type="scientific">Salmonella schwarzengrund (strain CVM19633)</name>
    <dbReference type="NCBI Taxonomy" id="439843"/>
    <lineage>
        <taxon>Bacteria</taxon>
        <taxon>Pseudomonadati</taxon>
        <taxon>Pseudomonadota</taxon>
        <taxon>Gammaproteobacteria</taxon>
        <taxon>Enterobacterales</taxon>
        <taxon>Enterobacteriaceae</taxon>
        <taxon>Salmonella</taxon>
    </lineage>
</organism>
<reference key="1">
    <citation type="journal article" date="2011" name="J. Bacteriol.">
        <title>Comparative genomics of 28 Salmonella enterica isolates: evidence for CRISPR-mediated adaptive sublineage evolution.</title>
        <authorList>
            <person name="Fricke W.F."/>
            <person name="Mammel M.K."/>
            <person name="McDermott P.F."/>
            <person name="Tartera C."/>
            <person name="White D.G."/>
            <person name="Leclerc J.E."/>
            <person name="Ravel J."/>
            <person name="Cebula T.A."/>
        </authorList>
    </citation>
    <scope>NUCLEOTIDE SEQUENCE [LARGE SCALE GENOMIC DNA]</scope>
    <source>
        <strain>CVM19633</strain>
    </source>
</reference>
<keyword id="KW-0963">Cytoplasm</keyword>
<keyword id="KW-0520">NAD</keyword>
<keyword id="KW-0521">NADP</keyword>
<keyword id="KW-0560">Oxidoreductase</keyword>
<name>GHRB_SALSV</name>
<proteinExistence type="inferred from homology"/>
<feature type="chain" id="PRO_1000187302" description="Glyoxylate/hydroxypyruvate reductase B">
    <location>
        <begin position="1"/>
        <end position="324"/>
    </location>
</feature>
<feature type="active site" evidence="1">
    <location>
        <position position="237"/>
    </location>
</feature>
<feature type="active site" evidence="1">
    <location>
        <position position="266"/>
    </location>
</feature>
<feature type="active site" description="Proton donor" evidence="1">
    <location>
        <position position="285"/>
    </location>
</feature>
<accession>B4TZ41</accession>
<comment type="function">
    <text evidence="1">Catalyzes the NADPH-dependent reduction of glyoxylate and hydroxypyruvate into glycolate and glycerate, respectively.</text>
</comment>
<comment type="catalytic activity">
    <reaction evidence="1">
        <text>glycolate + NADP(+) = glyoxylate + NADPH + H(+)</text>
        <dbReference type="Rhea" id="RHEA:10992"/>
        <dbReference type="ChEBI" id="CHEBI:15378"/>
        <dbReference type="ChEBI" id="CHEBI:29805"/>
        <dbReference type="ChEBI" id="CHEBI:36655"/>
        <dbReference type="ChEBI" id="CHEBI:57783"/>
        <dbReference type="ChEBI" id="CHEBI:58349"/>
        <dbReference type="EC" id="1.1.1.79"/>
    </reaction>
</comment>
<comment type="catalytic activity">
    <reaction evidence="1">
        <text>(R)-glycerate + NAD(+) = 3-hydroxypyruvate + NADH + H(+)</text>
        <dbReference type="Rhea" id="RHEA:17905"/>
        <dbReference type="ChEBI" id="CHEBI:15378"/>
        <dbReference type="ChEBI" id="CHEBI:16659"/>
        <dbReference type="ChEBI" id="CHEBI:17180"/>
        <dbReference type="ChEBI" id="CHEBI:57540"/>
        <dbReference type="ChEBI" id="CHEBI:57945"/>
        <dbReference type="EC" id="1.1.1.81"/>
    </reaction>
</comment>
<comment type="catalytic activity">
    <reaction evidence="1">
        <text>(R)-glycerate + NADP(+) = 3-hydroxypyruvate + NADPH + H(+)</text>
        <dbReference type="Rhea" id="RHEA:18657"/>
        <dbReference type="ChEBI" id="CHEBI:15378"/>
        <dbReference type="ChEBI" id="CHEBI:16659"/>
        <dbReference type="ChEBI" id="CHEBI:17180"/>
        <dbReference type="ChEBI" id="CHEBI:57783"/>
        <dbReference type="ChEBI" id="CHEBI:58349"/>
        <dbReference type="EC" id="1.1.1.81"/>
    </reaction>
</comment>
<comment type="subunit">
    <text evidence="1">Homodimer.</text>
</comment>
<comment type="subcellular location">
    <subcellularLocation>
        <location evidence="1">Cytoplasm</location>
    </subcellularLocation>
</comment>
<comment type="similarity">
    <text evidence="1">Belongs to the D-isomer specific 2-hydroxyacid dehydrogenase family. GhrB subfamily.</text>
</comment>